<feature type="chain" id="PRO_0000389761" description="Acetyl-coenzyme A carboxylase carboxyl transferase subunit beta">
    <location>
        <begin position="1"/>
        <end position="271"/>
    </location>
</feature>
<feature type="domain" description="CoA carboxyltransferase N-terminal" evidence="2">
    <location>
        <begin position="21"/>
        <end position="271"/>
    </location>
</feature>
<feature type="zinc finger region" description="C4-type" evidence="1">
    <location>
        <begin position="25"/>
        <end position="46"/>
    </location>
</feature>
<feature type="binding site" evidence="1">
    <location>
        <position position="25"/>
    </location>
    <ligand>
        <name>Zn(2+)</name>
        <dbReference type="ChEBI" id="CHEBI:29105"/>
    </ligand>
</feature>
<feature type="binding site" evidence="1">
    <location>
        <position position="28"/>
    </location>
    <ligand>
        <name>Zn(2+)</name>
        <dbReference type="ChEBI" id="CHEBI:29105"/>
    </ligand>
</feature>
<feature type="binding site" evidence="1">
    <location>
        <position position="43"/>
    </location>
    <ligand>
        <name>Zn(2+)</name>
        <dbReference type="ChEBI" id="CHEBI:29105"/>
    </ligand>
</feature>
<feature type="binding site" evidence="1">
    <location>
        <position position="46"/>
    </location>
    <ligand>
        <name>Zn(2+)</name>
        <dbReference type="ChEBI" id="CHEBI:29105"/>
    </ligand>
</feature>
<dbReference type="EC" id="2.1.3.15" evidence="1"/>
<dbReference type="EMBL" id="CP000423">
    <property type="protein sequence ID" value="ABJ70860.1"/>
    <property type="molecule type" value="Genomic_DNA"/>
</dbReference>
<dbReference type="RefSeq" id="WP_003566766.1">
    <property type="nucleotide sequence ID" value="NC_008526.1"/>
</dbReference>
<dbReference type="RefSeq" id="YP_807302.1">
    <property type="nucleotide sequence ID" value="NC_008526.1"/>
</dbReference>
<dbReference type="SMR" id="Q036L2"/>
<dbReference type="STRING" id="321967.LSEI_2110"/>
<dbReference type="PaxDb" id="321967-LSEI_2110"/>
<dbReference type="GeneID" id="57090733"/>
<dbReference type="KEGG" id="lca:LSEI_2110"/>
<dbReference type="PATRIC" id="fig|321967.11.peg.2072"/>
<dbReference type="HOGENOM" id="CLU_015486_1_1_9"/>
<dbReference type="UniPathway" id="UPA00655">
    <property type="reaction ID" value="UER00711"/>
</dbReference>
<dbReference type="Proteomes" id="UP000001651">
    <property type="component" value="Chromosome"/>
</dbReference>
<dbReference type="GO" id="GO:0009317">
    <property type="term" value="C:acetyl-CoA carboxylase complex"/>
    <property type="evidence" value="ECO:0007669"/>
    <property type="project" value="InterPro"/>
</dbReference>
<dbReference type="GO" id="GO:0003989">
    <property type="term" value="F:acetyl-CoA carboxylase activity"/>
    <property type="evidence" value="ECO:0007669"/>
    <property type="project" value="InterPro"/>
</dbReference>
<dbReference type="GO" id="GO:0005524">
    <property type="term" value="F:ATP binding"/>
    <property type="evidence" value="ECO:0007669"/>
    <property type="project" value="UniProtKB-KW"/>
</dbReference>
<dbReference type="GO" id="GO:0016743">
    <property type="term" value="F:carboxyl- or carbamoyltransferase activity"/>
    <property type="evidence" value="ECO:0007669"/>
    <property type="project" value="UniProtKB-UniRule"/>
</dbReference>
<dbReference type="GO" id="GO:0008270">
    <property type="term" value="F:zinc ion binding"/>
    <property type="evidence" value="ECO:0007669"/>
    <property type="project" value="UniProtKB-UniRule"/>
</dbReference>
<dbReference type="GO" id="GO:0006633">
    <property type="term" value="P:fatty acid biosynthetic process"/>
    <property type="evidence" value="ECO:0007669"/>
    <property type="project" value="UniProtKB-KW"/>
</dbReference>
<dbReference type="GO" id="GO:2001295">
    <property type="term" value="P:malonyl-CoA biosynthetic process"/>
    <property type="evidence" value="ECO:0007669"/>
    <property type="project" value="UniProtKB-UniRule"/>
</dbReference>
<dbReference type="Gene3D" id="3.90.226.10">
    <property type="entry name" value="2-enoyl-CoA Hydratase, Chain A, domain 1"/>
    <property type="match status" value="1"/>
</dbReference>
<dbReference type="HAMAP" id="MF_01395">
    <property type="entry name" value="AcetylCoA_CT_beta"/>
    <property type="match status" value="1"/>
</dbReference>
<dbReference type="InterPro" id="IPR034733">
    <property type="entry name" value="AcCoA_carboxyl_beta"/>
</dbReference>
<dbReference type="InterPro" id="IPR000438">
    <property type="entry name" value="Acetyl_CoA_COase_Trfase_b_su"/>
</dbReference>
<dbReference type="InterPro" id="IPR029045">
    <property type="entry name" value="ClpP/crotonase-like_dom_sf"/>
</dbReference>
<dbReference type="InterPro" id="IPR011762">
    <property type="entry name" value="COA_CT_N"/>
</dbReference>
<dbReference type="NCBIfam" id="TIGR00515">
    <property type="entry name" value="accD"/>
    <property type="match status" value="1"/>
</dbReference>
<dbReference type="PANTHER" id="PTHR42995">
    <property type="entry name" value="ACETYL-COENZYME A CARBOXYLASE CARBOXYL TRANSFERASE SUBUNIT BETA, CHLOROPLASTIC"/>
    <property type="match status" value="1"/>
</dbReference>
<dbReference type="PANTHER" id="PTHR42995:SF5">
    <property type="entry name" value="ACETYL-COENZYME A CARBOXYLASE CARBOXYL TRANSFERASE SUBUNIT BETA, CHLOROPLASTIC"/>
    <property type="match status" value="1"/>
</dbReference>
<dbReference type="Pfam" id="PF01039">
    <property type="entry name" value="Carboxyl_trans"/>
    <property type="match status" value="1"/>
</dbReference>
<dbReference type="PRINTS" id="PR01070">
    <property type="entry name" value="ACCCTRFRASEB"/>
</dbReference>
<dbReference type="SUPFAM" id="SSF52096">
    <property type="entry name" value="ClpP/crotonase"/>
    <property type="match status" value="1"/>
</dbReference>
<dbReference type="PROSITE" id="PS50980">
    <property type="entry name" value="COA_CT_NTER"/>
    <property type="match status" value="1"/>
</dbReference>
<evidence type="ECO:0000255" key="1">
    <source>
        <dbReference type="HAMAP-Rule" id="MF_01395"/>
    </source>
</evidence>
<evidence type="ECO:0000255" key="2">
    <source>
        <dbReference type="PROSITE-ProRule" id="PRU01136"/>
    </source>
</evidence>
<name>ACCD_LACP3</name>
<protein>
    <recommendedName>
        <fullName evidence="1">Acetyl-coenzyme A carboxylase carboxyl transferase subunit beta</fullName>
        <shortName evidence="1">ACCase subunit beta</shortName>
        <shortName evidence="1">Acetyl-CoA carboxylase carboxyltransferase subunit beta</shortName>
        <ecNumber evidence="1">2.1.3.15</ecNumber>
    </recommendedName>
</protein>
<accession>Q036L2</accession>
<comment type="function">
    <text evidence="1">Component of the acetyl coenzyme A carboxylase (ACC) complex. Biotin carboxylase (BC) catalyzes the carboxylation of biotin on its carrier protein (BCCP) and then the CO(2) group is transferred by the transcarboxylase to acetyl-CoA to form malonyl-CoA.</text>
</comment>
<comment type="catalytic activity">
    <reaction evidence="1">
        <text>N(6)-carboxybiotinyl-L-lysyl-[protein] + acetyl-CoA = N(6)-biotinyl-L-lysyl-[protein] + malonyl-CoA</text>
        <dbReference type="Rhea" id="RHEA:54728"/>
        <dbReference type="Rhea" id="RHEA-COMP:10505"/>
        <dbReference type="Rhea" id="RHEA-COMP:10506"/>
        <dbReference type="ChEBI" id="CHEBI:57288"/>
        <dbReference type="ChEBI" id="CHEBI:57384"/>
        <dbReference type="ChEBI" id="CHEBI:83144"/>
        <dbReference type="ChEBI" id="CHEBI:83145"/>
        <dbReference type="EC" id="2.1.3.15"/>
    </reaction>
</comment>
<comment type="cofactor">
    <cofactor evidence="1">
        <name>Zn(2+)</name>
        <dbReference type="ChEBI" id="CHEBI:29105"/>
    </cofactor>
    <text evidence="1">Binds 1 zinc ion per subunit.</text>
</comment>
<comment type="pathway">
    <text evidence="1">Lipid metabolism; malonyl-CoA biosynthesis; malonyl-CoA from acetyl-CoA: step 1/1.</text>
</comment>
<comment type="subunit">
    <text evidence="1">Acetyl-CoA carboxylase is a heterohexamer composed of biotin carboxyl carrier protein (AccB), biotin carboxylase (AccC) and two subunits each of ACCase subunit alpha (AccA) and ACCase subunit beta (AccD).</text>
</comment>
<comment type="subcellular location">
    <subcellularLocation>
        <location evidence="1">Cytoplasm</location>
    </subcellularLocation>
</comment>
<comment type="similarity">
    <text evidence="1">Belongs to the AccD/PCCB family.</text>
</comment>
<reference key="1">
    <citation type="journal article" date="2006" name="Proc. Natl. Acad. Sci. U.S.A.">
        <title>Comparative genomics of the lactic acid bacteria.</title>
        <authorList>
            <person name="Makarova K.S."/>
            <person name="Slesarev A."/>
            <person name="Wolf Y.I."/>
            <person name="Sorokin A."/>
            <person name="Mirkin B."/>
            <person name="Koonin E.V."/>
            <person name="Pavlov A."/>
            <person name="Pavlova N."/>
            <person name="Karamychev V."/>
            <person name="Polouchine N."/>
            <person name="Shakhova V."/>
            <person name="Grigoriev I."/>
            <person name="Lou Y."/>
            <person name="Rohksar D."/>
            <person name="Lucas S."/>
            <person name="Huang K."/>
            <person name="Goodstein D.M."/>
            <person name="Hawkins T."/>
            <person name="Plengvidhya V."/>
            <person name="Welker D."/>
            <person name="Hughes J."/>
            <person name="Goh Y."/>
            <person name="Benson A."/>
            <person name="Baldwin K."/>
            <person name="Lee J.-H."/>
            <person name="Diaz-Muniz I."/>
            <person name="Dosti B."/>
            <person name="Smeianov V."/>
            <person name="Wechter W."/>
            <person name="Barabote R."/>
            <person name="Lorca G."/>
            <person name="Altermann E."/>
            <person name="Barrangou R."/>
            <person name="Ganesan B."/>
            <person name="Xie Y."/>
            <person name="Rawsthorne H."/>
            <person name="Tamir D."/>
            <person name="Parker C."/>
            <person name="Breidt F."/>
            <person name="Broadbent J.R."/>
            <person name="Hutkins R."/>
            <person name="O'Sullivan D."/>
            <person name="Steele J."/>
            <person name="Unlu G."/>
            <person name="Saier M.H. Jr."/>
            <person name="Klaenhammer T."/>
            <person name="Richardson P."/>
            <person name="Kozyavkin S."/>
            <person name="Weimer B.C."/>
            <person name="Mills D.A."/>
        </authorList>
    </citation>
    <scope>NUCLEOTIDE SEQUENCE [LARGE SCALE GENOMIC DNA]</scope>
    <source>
        <strain>ATCC 334 / BCRC 17002 / CCUG 31169 / CIP 107868 / KCTC 3260 / NRRL B-441</strain>
    </source>
</reference>
<organism>
    <name type="scientific">Lacticaseibacillus paracasei (strain ATCC 334 / BCRC 17002 / CCUG 31169 / CIP 107868 / KCTC 3260 / NRRL B-441)</name>
    <name type="common">Lactobacillus paracasei</name>
    <dbReference type="NCBI Taxonomy" id="321967"/>
    <lineage>
        <taxon>Bacteria</taxon>
        <taxon>Bacillati</taxon>
        <taxon>Bacillota</taxon>
        <taxon>Bacilli</taxon>
        <taxon>Lactobacillales</taxon>
        <taxon>Lactobacillaceae</taxon>
        <taxon>Lacticaseibacillus</taxon>
    </lineage>
</organism>
<gene>
    <name evidence="1" type="primary">accD</name>
    <name type="ordered locus">LSEI_2110</name>
</gene>
<sequence>MSQPQLTQEALAREAALPENLWIQCPYCKQGSYRESLGNAQVCPHCHYGFRITAKKRLSLIATATEEWDADLVTSDPLDFPGYTEKLAAGQAATGLKDSVWTGQATIGGQSCALGIMDPKFMMGSLGTVTGERLTRLFEKATSANLAVVLFCASGGARMQEGIHSLMQMAKVSAAVKAHSNAGLLFISVLTDPTMGGVTASFAMQGDITLAEPHSLIGFAGRRVIEQTINQKLPQNFQRAETLLQSGFIDAVVQRQDQPSYLGDLLALHTA</sequence>
<keyword id="KW-0067">ATP-binding</keyword>
<keyword id="KW-0963">Cytoplasm</keyword>
<keyword id="KW-0275">Fatty acid biosynthesis</keyword>
<keyword id="KW-0276">Fatty acid metabolism</keyword>
<keyword id="KW-0444">Lipid biosynthesis</keyword>
<keyword id="KW-0443">Lipid metabolism</keyword>
<keyword id="KW-0479">Metal-binding</keyword>
<keyword id="KW-0547">Nucleotide-binding</keyword>
<keyword id="KW-1185">Reference proteome</keyword>
<keyword id="KW-0808">Transferase</keyword>
<keyword id="KW-0862">Zinc</keyword>
<keyword id="KW-0863">Zinc-finger</keyword>
<proteinExistence type="inferred from homology"/>